<accession>A5FRZ5</accession>
<evidence type="ECO:0000255" key="1">
    <source>
        <dbReference type="HAMAP-Rule" id="MF_00222"/>
    </source>
</evidence>
<protein>
    <recommendedName>
        <fullName evidence="1">Shikimate dehydrogenase (NADP(+))</fullName>
        <shortName evidence="1">SDH</shortName>
        <ecNumber evidence="1">1.1.1.25</ecNumber>
    </recommendedName>
</protein>
<organism>
    <name type="scientific">Dehalococcoides mccartyi (strain ATCC BAA-2100 / JCM 16839 / KCTC 5957 / BAV1)</name>
    <dbReference type="NCBI Taxonomy" id="216389"/>
    <lineage>
        <taxon>Bacteria</taxon>
        <taxon>Bacillati</taxon>
        <taxon>Chloroflexota</taxon>
        <taxon>Dehalococcoidia</taxon>
        <taxon>Dehalococcoidales</taxon>
        <taxon>Dehalococcoidaceae</taxon>
        <taxon>Dehalococcoides</taxon>
    </lineage>
</organism>
<gene>
    <name evidence="1" type="primary">aroE</name>
    <name type="ordered locus">DehaBAV1_0442</name>
</gene>
<name>AROE_DEHMB</name>
<comment type="function">
    <text evidence="1">Involved in the biosynthesis of the chorismate, which leads to the biosynthesis of aromatic amino acids. Catalyzes the reversible NADPH linked reduction of 3-dehydroshikimate (DHSA) to yield shikimate (SA).</text>
</comment>
<comment type="catalytic activity">
    <reaction evidence="1">
        <text>shikimate + NADP(+) = 3-dehydroshikimate + NADPH + H(+)</text>
        <dbReference type="Rhea" id="RHEA:17737"/>
        <dbReference type="ChEBI" id="CHEBI:15378"/>
        <dbReference type="ChEBI" id="CHEBI:16630"/>
        <dbReference type="ChEBI" id="CHEBI:36208"/>
        <dbReference type="ChEBI" id="CHEBI:57783"/>
        <dbReference type="ChEBI" id="CHEBI:58349"/>
        <dbReference type="EC" id="1.1.1.25"/>
    </reaction>
</comment>
<comment type="pathway">
    <text evidence="1">Metabolic intermediate biosynthesis; chorismate biosynthesis; chorismate from D-erythrose 4-phosphate and phosphoenolpyruvate: step 4/7.</text>
</comment>
<comment type="subunit">
    <text evidence="1">Homodimer.</text>
</comment>
<comment type="similarity">
    <text evidence="1">Belongs to the shikimate dehydrogenase family.</text>
</comment>
<dbReference type="EC" id="1.1.1.25" evidence="1"/>
<dbReference type="EMBL" id="CP000688">
    <property type="protein sequence ID" value="ABQ17027.1"/>
    <property type="molecule type" value="Genomic_DNA"/>
</dbReference>
<dbReference type="SMR" id="A5FRZ5"/>
<dbReference type="KEGG" id="deb:DehaBAV1_0442"/>
<dbReference type="PATRIC" id="fig|216389.18.peg.485"/>
<dbReference type="HOGENOM" id="CLU_044063_4_1_0"/>
<dbReference type="UniPathway" id="UPA00053">
    <property type="reaction ID" value="UER00087"/>
</dbReference>
<dbReference type="GO" id="GO:0050661">
    <property type="term" value="F:NADP binding"/>
    <property type="evidence" value="ECO:0007669"/>
    <property type="project" value="InterPro"/>
</dbReference>
<dbReference type="GO" id="GO:0004764">
    <property type="term" value="F:shikimate 3-dehydrogenase (NADP+) activity"/>
    <property type="evidence" value="ECO:0007669"/>
    <property type="project" value="UniProtKB-UniRule"/>
</dbReference>
<dbReference type="GO" id="GO:0008652">
    <property type="term" value="P:amino acid biosynthetic process"/>
    <property type="evidence" value="ECO:0007669"/>
    <property type="project" value="UniProtKB-KW"/>
</dbReference>
<dbReference type="GO" id="GO:0009073">
    <property type="term" value="P:aromatic amino acid family biosynthetic process"/>
    <property type="evidence" value="ECO:0007669"/>
    <property type="project" value="UniProtKB-KW"/>
</dbReference>
<dbReference type="GO" id="GO:0009423">
    <property type="term" value="P:chorismate biosynthetic process"/>
    <property type="evidence" value="ECO:0007669"/>
    <property type="project" value="UniProtKB-UniRule"/>
</dbReference>
<dbReference type="GO" id="GO:0019632">
    <property type="term" value="P:shikimate metabolic process"/>
    <property type="evidence" value="ECO:0007669"/>
    <property type="project" value="InterPro"/>
</dbReference>
<dbReference type="CDD" id="cd01065">
    <property type="entry name" value="NAD_bind_Shikimate_DH"/>
    <property type="match status" value="1"/>
</dbReference>
<dbReference type="Gene3D" id="3.40.50.10860">
    <property type="entry name" value="Leucine Dehydrogenase, chain A, domain 1"/>
    <property type="match status" value="1"/>
</dbReference>
<dbReference type="Gene3D" id="3.40.50.720">
    <property type="entry name" value="NAD(P)-binding Rossmann-like Domain"/>
    <property type="match status" value="1"/>
</dbReference>
<dbReference type="HAMAP" id="MF_00222">
    <property type="entry name" value="Shikimate_DH_AroE"/>
    <property type="match status" value="1"/>
</dbReference>
<dbReference type="InterPro" id="IPR046346">
    <property type="entry name" value="Aminoacid_DH-like_N_sf"/>
</dbReference>
<dbReference type="InterPro" id="IPR036291">
    <property type="entry name" value="NAD(P)-bd_dom_sf"/>
</dbReference>
<dbReference type="InterPro" id="IPR041121">
    <property type="entry name" value="SDH_C"/>
</dbReference>
<dbReference type="InterPro" id="IPR011342">
    <property type="entry name" value="Shikimate_DH"/>
</dbReference>
<dbReference type="InterPro" id="IPR013708">
    <property type="entry name" value="Shikimate_DH-bd_N"/>
</dbReference>
<dbReference type="InterPro" id="IPR022893">
    <property type="entry name" value="Shikimate_DH_fam"/>
</dbReference>
<dbReference type="NCBIfam" id="TIGR00507">
    <property type="entry name" value="aroE"/>
    <property type="match status" value="1"/>
</dbReference>
<dbReference type="NCBIfam" id="NF001319">
    <property type="entry name" value="PRK00258.3-3"/>
    <property type="match status" value="1"/>
</dbReference>
<dbReference type="NCBIfam" id="NF001322">
    <property type="entry name" value="PRK00258.3-6"/>
    <property type="match status" value="1"/>
</dbReference>
<dbReference type="PANTHER" id="PTHR21089:SF1">
    <property type="entry name" value="BIFUNCTIONAL 3-DEHYDROQUINATE DEHYDRATASE_SHIKIMATE DEHYDROGENASE, CHLOROPLASTIC"/>
    <property type="match status" value="1"/>
</dbReference>
<dbReference type="PANTHER" id="PTHR21089">
    <property type="entry name" value="SHIKIMATE DEHYDROGENASE"/>
    <property type="match status" value="1"/>
</dbReference>
<dbReference type="Pfam" id="PF18317">
    <property type="entry name" value="SDH_C"/>
    <property type="match status" value="1"/>
</dbReference>
<dbReference type="Pfam" id="PF08501">
    <property type="entry name" value="Shikimate_dh_N"/>
    <property type="match status" value="1"/>
</dbReference>
<dbReference type="SUPFAM" id="SSF53223">
    <property type="entry name" value="Aminoacid dehydrogenase-like, N-terminal domain"/>
    <property type="match status" value="1"/>
</dbReference>
<dbReference type="SUPFAM" id="SSF51735">
    <property type="entry name" value="NAD(P)-binding Rossmann-fold domains"/>
    <property type="match status" value="1"/>
</dbReference>
<sequence length="286" mass="31321">MQTIPDALFGIIGYPVSHSVSPAMQNAAFKHCKLNYLYLTIAAKPEDLQNVIASMRPLNIRGLNVTIPHKIEVIKYIDTLDPAAKKIGAVNTIVNENGQMKGYNTDFGGFVRLLEHNRIAPAKHRFALLGAGGSAHAISLAICTLGGHLTVLARQEEKAKDLAAKMCLRFKGKAQGLELNEANLEETLAESDIIVNCTPIGMGNLAGQSLISPRLLRPDLTVIDAIYNPCKTRLLEDAEKKGAKIINGLEMLVWQGAMSFEIWTSQKAPFRVMMKEAEMALDENEK</sequence>
<proteinExistence type="inferred from homology"/>
<keyword id="KW-0028">Amino-acid biosynthesis</keyword>
<keyword id="KW-0057">Aromatic amino acid biosynthesis</keyword>
<keyword id="KW-0521">NADP</keyword>
<keyword id="KW-0560">Oxidoreductase</keyword>
<feature type="chain" id="PRO_1000078119" description="Shikimate dehydrogenase (NADP(+))">
    <location>
        <begin position="1"/>
        <end position="286"/>
    </location>
</feature>
<feature type="active site" description="Proton acceptor" evidence="1">
    <location>
        <position position="70"/>
    </location>
</feature>
<feature type="binding site" evidence="1">
    <location>
        <begin position="19"/>
        <end position="21"/>
    </location>
    <ligand>
        <name>shikimate</name>
        <dbReference type="ChEBI" id="CHEBI:36208"/>
    </ligand>
</feature>
<feature type="binding site" evidence="1">
    <location>
        <position position="66"/>
    </location>
    <ligand>
        <name>shikimate</name>
        <dbReference type="ChEBI" id="CHEBI:36208"/>
    </ligand>
</feature>
<feature type="binding site" evidence="1">
    <location>
        <position position="91"/>
    </location>
    <ligand>
        <name>shikimate</name>
        <dbReference type="ChEBI" id="CHEBI:36208"/>
    </ligand>
</feature>
<feature type="binding site" evidence="1">
    <location>
        <position position="106"/>
    </location>
    <ligand>
        <name>shikimate</name>
        <dbReference type="ChEBI" id="CHEBI:36208"/>
    </ligand>
</feature>
<feature type="binding site" evidence="1">
    <location>
        <begin position="130"/>
        <end position="134"/>
    </location>
    <ligand>
        <name>NADP(+)</name>
        <dbReference type="ChEBI" id="CHEBI:58349"/>
    </ligand>
</feature>
<feature type="binding site" evidence="1">
    <location>
        <position position="225"/>
    </location>
    <ligand>
        <name>NADP(+)</name>
        <dbReference type="ChEBI" id="CHEBI:58349"/>
    </ligand>
</feature>
<feature type="binding site" evidence="1">
    <location>
        <position position="227"/>
    </location>
    <ligand>
        <name>shikimate</name>
        <dbReference type="ChEBI" id="CHEBI:36208"/>
    </ligand>
</feature>
<feature type="binding site" evidence="1">
    <location>
        <position position="248"/>
    </location>
    <ligand>
        <name>NADP(+)</name>
        <dbReference type="ChEBI" id="CHEBI:58349"/>
    </ligand>
</feature>
<reference key="1">
    <citation type="submission" date="2007-05" db="EMBL/GenBank/DDBJ databases">
        <title>Complete sequence of Dehalococcoides sp. BAV1.</title>
        <authorList>
            <consortium name="US DOE Joint Genome Institute"/>
            <person name="Copeland A."/>
            <person name="Lucas S."/>
            <person name="Lapidus A."/>
            <person name="Barry K."/>
            <person name="Detter J.C."/>
            <person name="Glavina del Rio T."/>
            <person name="Hammon N."/>
            <person name="Israni S."/>
            <person name="Pitluck S."/>
            <person name="Lowry S."/>
            <person name="Clum A."/>
            <person name="Schmutz J."/>
            <person name="Larimer F."/>
            <person name="Land M."/>
            <person name="Hauser L."/>
            <person name="Kyrpides N."/>
            <person name="Kim E."/>
            <person name="Ritalahti K.M."/>
            <person name="Loeffler F."/>
            <person name="Richardson P."/>
        </authorList>
    </citation>
    <scope>NUCLEOTIDE SEQUENCE [LARGE SCALE GENOMIC DNA]</scope>
    <source>
        <strain>ATCC BAA-2100 / JCM 16839 / KCTC 5957 / BAV1</strain>
    </source>
</reference>